<evidence type="ECO:0000255" key="1">
    <source>
        <dbReference type="HAMAP-Rule" id="MF_01385"/>
    </source>
</evidence>
<reference key="1">
    <citation type="journal article" date="2008" name="Genome Res.">
        <title>Genome sequence of the beta-rhizobium Cupriavidus taiwanensis and comparative genomics of rhizobia.</title>
        <authorList>
            <person name="Amadou C."/>
            <person name="Pascal G."/>
            <person name="Mangenot S."/>
            <person name="Glew M."/>
            <person name="Bontemps C."/>
            <person name="Capela D."/>
            <person name="Carrere S."/>
            <person name="Cruveiller S."/>
            <person name="Dossat C."/>
            <person name="Lajus A."/>
            <person name="Marchetti M."/>
            <person name="Poinsot V."/>
            <person name="Rouy Z."/>
            <person name="Servin B."/>
            <person name="Saad M."/>
            <person name="Schenowitz C."/>
            <person name="Barbe V."/>
            <person name="Batut J."/>
            <person name="Medigue C."/>
            <person name="Masson-Boivin C."/>
        </authorList>
    </citation>
    <scope>NUCLEOTIDE SEQUENCE [LARGE SCALE GENOMIC DNA]</scope>
    <source>
        <strain>DSM 17343 / BCRC 17206 / CCUG 44338 / CIP 107171 / LMG 19424 / R1</strain>
    </source>
</reference>
<sequence>MTGLHQLISLLHLASPALPIGGFSYSQGLEAAIECGSVHDAPTAERWIGDNLRHVQAQCEAPLWLLLHRHWQAGDAVRVRSWNDWFHATRETSELRLETEQMGWSLARLIAQMEWGTPALRETLAALSPVCLPTAFTAACVALEIGARDGLAAYCFNWAENQVAAAIKAVPLGQVAGQHMLRRLHGAVLDTVDEACRRAEATPPQLSTFSPMLGLLCARHETQYSRLFRS</sequence>
<accession>B3R404</accession>
<feature type="chain" id="PRO_1000145112" description="Urease accessory protein UreF">
    <location>
        <begin position="1"/>
        <end position="230"/>
    </location>
</feature>
<keyword id="KW-0143">Chaperone</keyword>
<keyword id="KW-0963">Cytoplasm</keyword>
<keyword id="KW-0996">Nickel insertion</keyword>
<organism>
    <name type="scientific">Cupriavidus taiwanensis (strain DSM 17343 / BCRC 17206 / CCUG 44338 / CIP 107171 / LMG 19424 / R1)</name>
    <name type="common">Ralstonia taiwanensis (strain LMG 19424)</name>
    <dbReference type="NCBI Taxonomy" id="977880"/>
    <lineage>
        <taxon>Bacteria</taxon>
        <taxon>Pseudomonadati</taxon>
        <taxon>Pseudomonadota</taxon>
        <taxon>Betaproteobacteria</taxon>
        <taxon>Burkholderiales</taxon>
        <taxon>Burkholderiaceae</taxon>
        <taxon>Cupriavidus</taxon>
    </lineage>
</organism>
<proteinExistence type="inferred from homology"/>
<dbReference type="EMBL" id="CU633749">
    <property type="protein sequence ID" value="CAQ69036.1"/>
    <property type="molecule type" value="Genomic_DNA"/>
</dbReference>
<dbReference type="RefSeq" id="WP_012352365.1">
    <property type="nucleotide sequence ID" value="NC_010528.1"/>
</dbReference>
<dbReference type="SMR" id="B3R404"/>
<dbReference type="GeneID" id="29762373"/>
<dbReference type="KEGG" id="cti:RALTA_A1071"/>
<dbReference type="eggNOG" id="COG0830">
    <property type="taxonomic scope" value="Bacteria"/>
</dbReference>
<dbReference type="HOGENOM" id="CLU_049215_2_1_4"/>
<dbReference type="BioCyc" id="CTAI977880:RALTA_RS05100-MONOMER"/>
<dbReference type="Proteomes" id="UP000001692">
    <property type="component" value="Chromosome 1"/>
</dbReference>
<dbReference type="GO" id="GO:0005737">
    <property type="term" value="C:cytoplasm"/>
    <property type="evidence" value="ECO:0007669"/>
    <property type="project" value="UniProtKB-SubCell"/>
</dbReference>
<dbReference type="GO" id="GO:0016151">
    <property type="term" value="F:nickel cation binding"/>
    <property type="evidence" value="ECO:0007669"/>
    <property type="project" value="UniProtKB-UniRule"/>
</dbReference>
<dbReference type="Gene3D" id="1.10.4190.10">
    <property type="entry name" value="Urease accessory protein UreF"/>
    <property type="match status" value="1"/>
</dbReference>
<dbReference type="HAMAP" id="MF_01385">
    <property type="entry name" value="UreF"/>
    <property type="match status" value="1"/>
</dbReference>
<dbReference type="InterPro" id="IPR002639">
    <property type="entry name" value="UreF"/>
</dbReference>
<dbReference type="InterPro" id="IPR038277">
    <property type="entry name" value="UreF_sf"/>
</dbReference>
<dbReference type="PANTHER" id="PTHR33620">
    <property type="entry name" value="UREASE ACCESSORY PROTEIN F"/>
    <property type="match status" value="1"/>
</dbReference>
<dbReference type="PANTHER" id="PTHR33620:SF1">
    <property type="entry name" value="UREASE ACCESSORY PROTEIN F"/>
    <property type="match status" value="1"/>
</dbReference>
<dbReference type="Pfam" id="PF01730">
    <property type="entry name" value="UreF"/>
    <property type="match status" value="1"/>
</dbReference>
<dbReference type="PIRSF" id="PIRSF009467">
    <property type="entry name" value="Ureas_acces_UreF"/>
    <property type="match status" value="1"/>
</dbReference>
<protein>
    <recommendedName>
        <fullName evidence="1">Urease accessory protein UreF</fullName>
    </recommendedName>
</protein>
<name>UREF_CUPTR</name>
<gene>
    <name evidence="1" type="primary">ureF</name>
    <name type="ordered locus">RALTA_A1071</name>
</gene>
<comment type="function">
    <text evidence="1">Required for maturation of urease via the functional incorporation of the urease nickel metallocenter.</text>
</comment>
<comment type="subunit">
    <text evidence="1">UreD, UreF and UreG form a complex that acts as a GTP-hydrolysis-dependent molecular chaperone, activating the urease apoprotein by helping to assemble the nickel containing metallocenter of UreC. The UreE protein probably delivers the nickel.</text>
</comment>
<comment type="subcellular location">
    <subcellularLocation>
        <location evidence="1">Cytoplasm</location>
    </subcellularLocation>
</comment>
<comment type="similarity">
    <text evidence="1">Belongs to the UreF family.</text>
</comment>